<proteinExistence type="inferred from homology"/>
<gene>
    <name type="primary">SNL4</name>
    <name type="ordered locus">At1g70060</name>
    <name type="ORF">F20P5.21</name>
</gene>
<feature type="chain" id="PRO_0000394042" description="Paired amphipathic helix protein Sin3-like 4">
    <location>
        <begin position="1"/>
        <end position="1326"/>
    </location>
</feature>
<feature type="domain" description="PAH 1" evidence="2">
    <location>
        <begin position="8"/>
        <end position="78"/>
    </location>
</feature>
<feature type="domain" description="PAH 2" evidence="2">
    <location>
        <begin position="95"/>
        <end position="165"/>
    </location>
</feature>
<feature type="domain" description="PAH 3" evidence="2">
    <location>
        <begin position="292"/>
        <end position="367"/>
    </location>
</feature>
<feature type="region of interest" description="Disordered" evidence="3">
    <location>
        <begin position="272"/>
        <end position="299"/>
    </location>
</feature>
<feature type="region of interest" description="Disordered" evidence="3">
    <location>
        <begin position="715"/>
        <end position="812"/>
    </location>
</feature>
<feature type="region of interest" description="Disordered" evidence="3">
    <location>
        <begin position="844"/>
        <end position="864"/>
    </location>
</feature>
<feature type="region of interest" description="Disordered" evidence="3">
    <location>
        <begin position="927"/>
        <end position="1000"/>
    </location>
</feature>
<feature type="compositionally biased region" description="Basic and acidic residues" evidence="3">
    <location>
        <begin position="721"/>
        <end position="737"/>
    </location>
</feature>
<feature type="compositionally biased region" description="Polar residues" evidence="3">
    <location>
        <begin position="744"/>
        <end position="757"/>
    </location>
</feature>
<feature type="compositionally biased region" description="Polar residues" evidence="3">
    <location>
        <begin position="781"/>
        <end position="805"/>
    </location>
</feature>
<feature type="compositionally biased region" description="Polar residues" evidence="3">
    <location>
        <begin position="844"/>
        <end position="861"/>
    </location>
</feature>
<feature type="compositionally biased region" description="Polar residues" evidence="3">
    <location>
        <begin position="942"/>
        <end position="961"/>
    </location>
</feature>
<feature type="compositionally biased region" description="Basic and acidic residues" evidence="3">
    <location>
        <begin position="967"/>
        <end position="981"/>
    </location>
</feature>
<accession>O04539</accession>
<accession>F4I3W8</accession>
<sequence length="1326" mass="150792">MVGGSSAQKLTTNDALAYLKAVKDKFQDKRDKYDEFLEVMKDFKAQRVDTTGVILRVKELFKGNRELILGFNTFLPKGFEITLRPEDDQPAAPKKPVEFEEAISFVNKIKTRFQGDDRVYKSFLDILNMYRKENKSITEVYHEVAILFRDHHDLLGEFTHFLPDTSATASTNDSVKVPVRDRGIKSLPTMRQIDLDKKDRIITSHPNRALKTENMDVDHERSLLKDSKEEVRRIDKKNDFMDDRDRKDYRGLDHDSHKEHFFNSKKKLIRKDDDSAEMSDQAREGDKFSGAIPSSSTYDEKGHSQELAFVDRVKAKLDTADNQEFLRCLNLYSKEIISQPELQSLVSDLIGVYPDLMDAFKVFLAQCDKNDGLLSGIVSKKSLWSEGKCPQPTKSLDKDTDREREKIERYRERDREKERLEKVAASQKWAKPISELDLSNCEQCTPSYRRLPKNYPIPIASQKMEIGSQVLNDHWVSVTSGSEDYSFKHMRKNQYEESLFKCEDDRFELDMLLESVISATNRVEELLAKINSNELKTDTPICIEDHLTALNLRCIERLYSDHGLDVLDLLKKNAYLALPVILTRLKQKQEEWARCRTEFNKVWADIYTKNYHRSLDHRSFYFKQQDSKNLSTKALLAEIKEISEKKRGEDDALLALAAGNRRTISSNMSFDYPDPDLHEDLYQLIKYSCGEMCSTEQLDKVMKVWTEFLEPIFGVPSRPQGAEDREDAVKSTNHDREDQEDAVSPQNGASIANSMRSNGPRKVNESNQVRQASELDKDVTSSKTSDALLSCDNTQNDKMPKNLTTPDERAETKQAVSIERAHNSNALPLDGLLPQRNGKISSLSVAGLSNSNPKPALTSGTEELKPNYVNGPRVEIGDNPVIPNGTVAEWFAGEAKVEREEGELSPTGDFEEDNYAVHGENDMEALSKSKENDATADDASAPRSSDGSGNTSHNGDVSGTDSGDGEDCYREDDIDHNKVESEGEAEEGMSDGHDDTEGDMPVLSISVKNLLHVKPLAKYVPPALYDKDNDDSRKNSQVFYGNDSFYVLFRLHQILYDRILSAKINSSSPDRKWKTSNPTNPADSYARIMDALYNLLDGTSDNSKFEDDCRAIIGTQSYVLFTLDKLIYKLIKHLQAVAADEMDNKLQQLYAYEKSRKPEKFLDAVYYENALVLLPDEDIYRIECEQSTPSKLSIQLLDYGHDKPDVTSISMDPTFAAYLHNVFLSYQPNAKENPRIYLKRNKRKNGGDDELCTTDEVKIINGLECKITCSSSKVSYVLDTEDVLHRAKRRKLLNQSGLPLAHDSVCSGSLIRQRRTQRYQKLLTGQ</sequence>
<dbReference type="EMBL" id="AC002062">
    <property type="protein sequence ID" value="AAB61107.1"/>
    <property type="status" value="ALT_SEQ"/>
    <property type="molecule type" value="Genomic_DNA"/>
</dbReference>
<dbReference type="EMBL" id="CP002684">
    <property type="protein sequence ID" value="AEE35012.1"/>
    <property type="molecule type" value="Genomic_DNA"/>
</dbReference>
<dbReference type="EMBL" id="CP002684">
    <property type="protein sequence ID" value="ANM60804.1"/>
    <property type="molecule type" value="Genomic_DNA"/>
</dbReference>
<dbReference type="PIR" id="C96723">
    <property type="entry name" value="C96723"/>
</dbReference>
<dbReference type="RefSeq" id="NP_001323064.1">
    <property type="nucleotide sequence ID" value="NM_001334433.1"/>
</dbReference>
<dbReference type="RefSeq" id="NP_177163.3">
    <property type="nucleotide sequence ID" value="NM_105674.6"/>
</dbReference>
<dbReference type="SMR" id="O04539"/>
<dbReference type="FunCoup" id="O04539">
    <property type="interactions" value="3973"/>
</dbReference>
<dbReference type="IntAct" id="O04539">
    <property type="interactions" value="1"/>
</dbReference>
<dbReference type="STRING" id="3702.O04539"/>
<dbReference type="iPTMnet" id="O04539"/>
<dbReference type="PaxDb" id="3702-AT1G70060.1"/>
<dbReference type="ProteomicsDB" id="232645"/>
<dbReference type="EnsemblPlants" id="AT1G70060.1">
    <property type="protein sequence ID" value="AT1G70060.1"/>
    <property type="gene ID" value="AT1G70060"/>
</dbReference>
<dbReference type="EnsemblPlants" id="AT1G70060.2">
    <property type="protein sequence ID" value="AT1G70060.2"/>
    <property type="gene ID" value="AT1G70060"/>
</dbReference>
<dbReference type="GeneID" id="843342"/>
<dbReference type="Gramene" id="AT1G70060.1">
    <property type="protein sequence ID" value="AT1G70060.1"/>
    <property type="gene ID" value="AT1G70060"/>
</dbReference>
<dbReference type="Gramene" id="AT1G70060.2">
    <property type="protein sequence ID" value="AT1G70060.2"/>
    <property type="gene ID" value="AT1G70060"/>
</dbReference>
<dbReference type="KEGG" id="ath:AT1G70060"/>
<dbReference type="Araport" id="AT1G70060"/>
<dbReference type="TAIR" id="AT1G70060">
    <property type="gene designation" value="SNL4"/>
</dbReference>
<dbReference type="eggNOG" id="KOG4204">
    <property type="taxonomic scope" value="Eukaryota"/>
</dbReference>
<dbReference type="HOGENOM" id="CLU_007140_1_0_1"/>
<dbReference type="InParanoid" id="O04539"/>
<dbReference type="OMA" id="GLCRDAH"/>
<dbReference type="PRO" id="PR:O04539"/>
<dbReference type="Proteomes" id="UP000006548">
    <property type="component" value="Chromosome 1"/>
</dbReference>
<dbReference type="ExpressionAtlas" id="O04539">
    <property type="expression patterns" value="baseline and differential"/>
</dbReference>
<dbReference type="GO" id="GO:0005634">
    <property type="term" value="C:nucleus"/>
    <property type="evidence" value="ECO:0007669"/>
    <property type="project" value="UniProtKB-SubCell"/>
</dbReference>
<dbReference type="GO" id="GO:0003714">
    <property type="term" value="F:transcription corepressor activity"/>
    <property type="evidence" value="ECO:0007669"/>
    <property type="project" value="InterPro"/>
</dbReference>
<dbReference type="FunFam" id="1.20.1160.11:FF:000002">
    <property type="entry name" value="Paired amphipathic helix protein SIN3"/>
    <property type="match status" value="1"/>
</dbReference>
<dbReference type="FunFam" id="1.20.1160.11:FF:000001">
    <property type="entry name" value="Paired amphipathic helix protein Sin3"/>
    <property type="match status" value="1"/>
</dbReference>
<dbReference type="FunFam" id="1.20.1160.11:FF:000003">
    <property type="entry name" value="Paired amphipathic helix SIN3-like protein"/>
    <property type="match status" value="1"/>
</dbReference>
<dbReference type="Gene3D" id="1.20.1160.11">
    <property type="entry name" value="Paired amphipathic helix"/>
    <property type="match status" value="3"/>
</dbReference>
<dbReference type="InterPro" id="IPR013194">
    <property type="entry name" value="HDAC_interact_dom"/>
</dbReference>
<dbReference type="InterPro" id="IPR003822">
    <property type="entry name" value="PAH"/>
</dbReference>
<dbReference type="InterPro" id="IPR036600">
    <property type="entry name" value="PAH_sf"/>
</dbReference>
<dbReference type="InterPro" id="IPR039774">
    <property type="entry name" value="Sin3-like"/>
</dbReference>
<dbReference type="InterPro" id="IPR031693">
    <property type="entry name" value="Sin3_C"/>
</dbReference>
<dbReference type="PANTHER" id="PTHR12346:SF0">
    <property type="entry name" value="SIN3A, ISOFORM G"/>
    <property type="match status" value="1"/>
</dbReference>
<dbReference type="PANTHER" id="PTHR12346">
    <property type="entry name" value="SIN3B-RELATED"/>
    <property type="match status" value="1"/>
</dbReference>
<dbReference type="Pfam" id="PF02671">
    <property type="entry name" value="PAH"/>
    <property type="match status" value="3"/>
</dbReference>
<dbReference type="Pfam" id="PF08295">
    <property type="entry name" value="Sin3_corepress"/>
    <property type="match status" value="1"/>
</dbReference>
<dbReference type="Pfam" id="PF16879">
    <property type="entry name" value="Sin3a_C"/>
    <property type="match status" value="1"/>
</dbReference>
<dbReference type="SMART" id="SM00761">
    <property type="entry name" value="HDAC_interact"/>
    <property type="match status" value="1"/>
</dbReference>
<dbReference type="SUPFAM" id="SSF47762">
    <property type="entry name" value="PAH2 domain"/>
    <property type="match status" value="3"/>
</dbReference>
<dbReference type="PROSITE" id="PS51477">
    <property type="entry name" value="PAH"/>
    <property type="match status" value="3"/>
</dbReference>
<protein>
    <recommendedName>
        <fullName>Paired amphipathic helix protein Sin3-like 4</fullName>
    </recommendedName>
</protein>
<keyword id="KW-0539">Nucleus</keyword>
<keyword id="KW-1185">Reference proteome</keyword>
<keyword id="KW-0677">Repeat</keyword>
<keyword id="KW-0678">Repressor</keyword>
<keyword id="KW-0804">Transcription</keyword>
<keyword id="KW-0805">Transcription regulation</keyword>
<comment type="function">
    <text evidence="1">Acts as a transcriptional repressor. Plays roles in regulating gene expression and genome stability (By similarity).</text>
</comment>
<comment type="subcellular location">
    <subcellularLocation>
        <location evidence="2">Nucleus</location>
    </subcellularLocation>
</comment>
<comment type="sequence caution" evidence="4">
    <conflict type="erroneous gene model prediction">
        <sequence resource="EMBL-CDS" id="AAB61107"/>
    </conflict>
</comment>
<evidence type="ECO:0000250" key="1"/>
<evidence type="ECO:0000255" key="2">
    <source>
        <dbReference type="PROSITE-ProRule" id="PRU00810"/>
    </source>
</evidence>
<evidence type="ECO:0000256" key="3">
    <source>
        <dbReference type="SAM" id="MobiDB-lite"/>
    </source>
</evidence>
<evidence type="ECO:0000305" key="4"/>
<name>SNL4_ARATH</name>
<reference key="1">
    <citation type="journal article" date="2000" name="Nature">
        <title>Sequence and analysis of chromosome 1 of the plant Arabidopsis thaliana.</title>
        <authorList>
            <person name="Theologis A."/>
            <person name="Ecker J.R."/>
            <person name="Palm C.J."/>
            <person name="Federspiel N.A."/>
            <person name="Kaul S."/>
            <person name="White O."/>
            <person name="Alonso J."/>
            <person name="Altafi H."/>
            <person name="Araujo R."/>
            <person name="Bowman C.L."/>
            <person name="Brooks S.Y."/>
            <person name="Buehler E."/>
            <person name="Chan A."/>
            <person name="Chao Q."/>
            <person name="Chen H."/>
            <person name="Cheuk R.F."/>
            <person name="Chin C.W."/>
            <person name="Chung M.K."/>
            <person name="Conn L."/>
            <person name="Conway A.B."/>
            <person name="Conway A.R."/>
            <person name="Creasy T.H."/>
            <person name="Dewar K."/>
            <person name="Dunn P."/>
            <person name="Etgu P."/>
            <person name="Feldblyum T.V."/>
            <person name="Feng J.-D."/>
            <person name="Fong B."/>
            <person name="Fujii C.Y."/>
            <person name="Gill J.E."/>
            <person name="Goldsmith A.D."/>
            <person name="Haas B."/>
            <person name="Hansen N.F."/>
            <person name="Hughes B."/>
            <person name="Huizar L."/>
            <person name="Hunter J.L."/>
            <person name="Jenkins J."/>
            <person name="Johnson-Hopson C."/>
            <person name="Khan S."/>
            <person name="Khaykin E."/>
            <person name="Kim C.J."/>
            <person name="Koo H.L."/>
            <person name="Kremenetskaia I."/>
            <person name="Kurtz D.B."/>
            <person name="Kwan A."/>
            <person name="Lam B."/>
            <person name="Langin-Hooper S."/>
            <person name="Lee A."/>
            <person name="Lee J.M."/>
            <person name="Lenz C.A."/>
            <person name="Li J.H."/>
            <person name="Li Y.-P."/>
            <person name="Lin X."/>
            <person name="Liu S.X."/>
            <person name="Liu Z.A."/>
            <person name="Luros J.S."/>
            <person name="Maiti R."/>
            <person name="Marziali A."/>
            <person name="Militscher J."/>
            <person name="Miranda M."/>
            <person name="Nguyen M."/>
            <person name="Nierman W.C."/>
            <person name="Osborne B.I."/>
            <person name="Pai G."/>
            <person name="Peterson J."/>
            <person name="Pham P.K."/>
            <person name="Rizzo M."/>
            <person name="Rooney T."/>
            <person name="Rowley D."/>
            <person name="Sakano H."/>
            <person name="Salzberg S.L."/>
            <person name="Schwartz J.R."/>
            <person name="Shinn P."/>
            <person name="Southwick A.M."/>
            <person name="Sun H."/>
            <person name="Tallon L.J."/>
            <person name="Tambunga G."/>
            <person name="Toriumi M.J."/>
            <person name="Town C.D."/>
            <person name="Utterback T."/>
            <person name="Van Aken S."/>
            <person name="Vaysberg M."/>
            <person name="Vysotskaia V.S."/>
            <person name="Walker M."/>
            <person name="Wu D."/>
            <person name="Yu G."/>
            <person name="Fraser C.M."/>
            <person name="Venter J.C."/>
            <person name="Davis R.W."/>
        </authorList>
    </citation>
    <scope>NUCLEOTIDE SEQUENCE [LARGE SCALE GENOMIC DNA]</scope>
    <source>
        <strain>cv. Columbia</strain>
    </source>
</reference>
<reference key="2">
    <citation type="journal article" date="2017" name="Plant J.">
        <title>Araport11: a complete reannotation of the Arabidopsis thaliana reference genome.</title>
        <authorList>
            <person name="Cheng C.Y."/>
            <person name="Krishnakumar V."/>
            <person name="Chan A.P."/>
            <person name="Thibaud-Nissen F."/>
            <person name="Schobel S."/>
            <person name="Town C.D."/>
        </authorList>
    </citation>
    <scope>GENOME REANNOTATION</scope>
    <source>
        <strain>cv. Columbia</strain>
    </source>
</reference>
<reference key="3">
    <citation type="journal article" date="2010" name="J. Mol. Biol.">
        <title>PAH-domain-specific interactions of the Arabidopsis transcription coregulator SIN3-LIKE1 (SNL1) with telomere-binding protein 1 and ALWAYS EARLY2 Myb-DNA binding factors.</title>
        <authorList>
            <person name="Bowen A.J."/>
            <person name="Gonzalez D."/>
            <person name="Mullins J.G."/>
            <person name="Bhatt A.M."/>
            <person name="Martinez A."/>
            <person name="Conlan R.S."/>
        </authorList>
    </citation>
    <scope>GENE FAMILY</scope>
    <scope>NOMENCLATURE</scope>
</reference>
<organism>
    <name type="scientific">Arabidopsis thaliana</name>
    <name type="common">Mouse-ear cress</name>
    <dbReference type="NCBI Taxonomy" id="3702"/>
    <lineage>
        <taxon>Eukaryota</taxon>
        <taxon>Viridiplantae</taxon>
        <taxon>Streptophyta</taxon>
        <taxon>Embryophyta</taxon>
        <taxon>Tracheophyta</taxon>
        <taxon>Spermatophyta</taxon>
        <taxon>Magnoliopsida</taxon>
        <taxon>eudicotyledons</taxon>
        <taxon>Gunneridae</taxon>
        <taxon>Pentapetalae</taxon>
        <taxon>rosids</taxon>
        <taxon>malvids</taxon>
        <taxon>Brassicales</taxon>
        <taxon>Brassicaceae</taxon>
        <taxon>Camelineae</taxon>
        <taxon>Arabidopsis</taxon>
    </lineage>
</organism>